<evidence type="ECO:0000255" key="1">
    <source>
        <dbReference type="HAMAP-Rule" id="MF_01850"/>
    </source>
</evidence>
<feature type="chain" id="PRO_0000348750" description="tRNA-cytidine(32) 2-sulfurtransferase">
    <location>
        <begin position="1"/>
        <end position="314"/>
    </location>
</feature>
<feature type="short sequence motif" description="PP-loop motif" evidence="1">
    <location>
        <begin position="49"/>
        <end position="54"/>
    </location>
</feature>
<feature type="binding site" evidence="1">
    <location>
        <position position="124"/>
    </location>
    <ligand>
        <name>[4Fe-4S] cluster</name>
        <dbReference type="ChEBI" id="CHEBI:49883"/>
    </ligand>
</feature>
<feature type="binding site" evidence="1">
    <location>
        <position position="127"/>
    </location>
    <ligand>
        <name>[4Fe-4S] cluster</name>
        <dbReference type="ChEBI" id="CHEBI:49883"/>
    </ligand>
</feature>
<feature type="binding site" evidence="1">
    <location>
        <position position="215"/>
    </location>
    <ligand>
        <name>[4Fe-4S] cluster</name>
        <dbReference type="ChEBI" id="CHEBI:49883"/>
    </ligand>
</feature>
<accession>Q0I3K3</accession>
<sequence length="314" mass="35822">MNLNIITEKDKKQSYNLNKLQKRLRRNVGNAIADFNMIENGDKVMVCLSGGKDSYTLLDILLNLRLNAPIHFDIVAVNLDQKQPGFPEHILPEYLKSISVDYKIVAENTYGIVKEKIPEGKTTCSLCSRLRRGILYRTATELGATKIALGHHRDDMLETLFLNMFYGGKLKSMPPKLISDDGKQIVIRPLAYCKEKDIEKYAVAKQFPIIPCNLCGSQPNLQRQVVKEMLQKWDRQYPGRIETMFSAIQNIVPSHLCDSNLFDFKRIRHGKIPEGIEGDIAFDKEAFSPTPLVQENDEKIDFIQGEMISFKEVN</sequence>
<name>TTCA_HISS1</name>
<protein>
    <recommendedName>
        <fullName evidence="1">tRNA-cytidine(32) 2-sulfurtransferase</fullName>
        <ecNumber evidence="1">2.8.1.-</ecNumber>
    </recommendedName>
    <alternativeName>
        <fullName evidence="1">Two-thiocytidine biosynthesis protein A</fullName>
    </alternativeName>
    <alternativeName>
        <fullName evidence="1">tRNA 2-thiocytidine biosynthesis protein TtcA</fullName>
    </alternativeName>
</protein>
<comment type="function">
    <text evidence="1">Catalyzes the ATP-dependent 2-thiolation of cytidine in position 32 of tRNA, to form 2-thiocytidine (s(2)C32). The sulfur atoms are provided by the cysteine/cysteine desulfurase (IscS) system.</text>
</comment>
<comment type="catalytic activity">
    <reaction evidence="1">
        <text>cytidine(32) in tRNA + S-sulfanyl-L-cysteinyl-[cysteine desulfurase] + AH2 + ATP = 2-thiocytidine(32) in tRNA + L-cysteinyl-[cysteine desulfurase] + A + AMP + diphosphate + H(+)</text>
        <dbReference type="Rhea" id="RHEA:57048"/>
        <dbReference type="Rhea" id="RHEA-COMP:10288"/>
        <dbReference type="Rhea" id="RHEA-COMP:12157"/>
        <dbReference type="Rhea" id="RHEA-COMP:12158"/>
        <dbReference type="Rhea" id="RHEA-COMP:14821"/>
        <dbReference type="ChEBI" id="CHEBI:13193"/>
        <dbReference type="ChEBI" id="CHEBI:15378"/>
        <dbReference type="ChEBI" id="CHEBI:17499"/>
        <dbReference type="ChEBI" id="CHEBI:29950"/>
        <dbReference type="ChEBI" id="CHEBI:30616"/>
        <dbReference type="ChEBI" id="CHEBI:33019"/>
        <dbReference type="ChEBI" id="CHEBI:61963"/>
        <dbReference type="ChEBI" id="CHEBI:82748"/>
        <dbReference type="ChEBI" id="CHEBI:141453"/>
        <dbReference type="ChEBI" id="CHEBI:456215"/>
    </reaction>
    <physiologicalReaction direction="left-to-right" evidence="1">
        <dbReference type="Rhea" id="RHEA:57049"/>
    </physiologicalReaction>
</comment>
<comment type="cofactor">
    <cofactor evidence="1">
        <name>Mg(2+)</name>
        <dbReference type="ChEBI" id="CHEBI:18420"/>
    </cofactor>
</comment>
<comment type="cofactor">
    <cofactor evidence="1">
        <name>[4Fe-4S] cluster</name>
        <dbReference type="ChEBI" id="CHEBI:49883"/>
    </cofactor>
    <text evidence="1">Binds 1 [4Fe-4S] cluster per subunit. The cluster is chelated by three Cys residues, the fourth Fe has a free coordination site that may bind a sulfur atom transferred from the persulfide of IscS.</text>
</comment>
<comment type="pathway">
    <text evidence="1">tRNA modification.</text>
</comment>
<comment type="subunit">
    <text evidence="1">Homodimer.</text>
</comment>
<comment type="subcellular location">
    <subcellularLocation>
        <location evidence="1">Cytoplasm</location>
    </subcellularLocation>
</comment>
<comment type="miscellaneous">
    <text evidence="1">The thiolation reaction likely consists of two steps: a first activation step by ATP to form an adenylated intermediate of the target base of tRNA, and a second nucleophilic substitution step of the sulfur (S) atom supplied by the hydrosulfide attached to the Fe-S cluster.</text>
</comment>
<comment type="similarity">
    <text evidence="1">Belongs to the TtcA family.</text>
</comment>
<reference key="1">
    <citation type="journal article" date="2007" name="J. Bacteriol.">
        <title>Complete genome sequence of Haemophilus somnus (Histophilus somni) strain 129Pt and comparison to Haemophilus ducreyi 35000HP and Haemophilus influenzae Rd.</title>
        <authorList>
            <person name="Challacombe J.F."/>
            <person name="Duncan A.J."/>
            <person name="Brettin T.S."/>
            <person name="Bruce D."/>
            <person name="Chertkov O."/>
            <person name="Detter J.C."/>
            <person name="Han C.S."/>
            <person name="Misra M."/>
            <person name="Richardson P."/>
            <person name="Tapia R."/>
            <person name="Thayer N."/>
            <person name="Xie G."/>
            <person name="Inzana T.J."/>
        </authorList>
    </citation>
    <scope>NUCLEOTIDE SEQUENCE [LARGE SCALE GENOMIC DNA]</scope>
    <source>
        <strain>129Pt</strain>
    </source>
</reference>
<proteinExistence type="inferred from homology"/>
<dbReference type="EC" id="2.8.1.-" evidence="1"/>
<dbReference type="EMBL" id="CP000436">
    <property type="protein sequence ID" value="ABI25138.1"/>
    <property type="molecule type" value="Genomic_DNA"/>
</dbReference>
<dbReference type="SMR" id="Q0I3K3"/>
<dbReference type="KEGG" id="hso:HS_0863"/>
<dbReference type="eggNOG" id="COG0037">
    <property type="taxonomic scope" value="Bacteria"/>
</dbReference>
<dbReference type="HOGENOM" id="CLU_026481_0_0_6"/>
<dbReference type="GO" id="GO:0005737">
    <property type="term" value="C:cytoplasm"/>
    <property type="evidence" value="ECO:0007669"/>
    <property type="project" value="UniProtKB-SubCell"/>
</dbReference>
<dbReference type="GO" id="GO:0051539">
    <property type="term" value="F:4 iron, 4 sulfur cluster binding"/>
    <property type="evidence" value="ECO:0007669"/>
    <property type="project" value="UniProtKB-UniRule"/>
</dbReference>
<dbReference type="GO" id="GO:0005524">
    <property type="term" value="F:ATP binding"/>
    <property type="evidence" value="ECO:0007669"/>
    <property type="project" value="UniProtKB-UniRule"/>
</dbReference>
<dbReference type="GO" id="GO:0000287">
    <property type="term" value="F:magnesium ion binding"/>
    <property type="evidence" value="ECO:0007669"/>
    <property type="project" value="UniProtKB-UniRule"/>
</dbReference>
<dbReference type="GO" id="GO:0016783">
    <property type="term" value="F:sulfurtransferase activity"/>
    <property type="evidence" value="ECO:0007669"/>
    <property type="project" value="UniProtKB-UniRule"/>
</dbReference>
<dbReference type="GO" id="GO:0000049">
    <property type="term" value="F:tRNA binding"/>
    <property type="evidence" value="ECO:0007669"/>
    <property type="project" value="UniProtKB-KW"/>
</dbReference>
<dbReference type="GO" id="GO:0034227">
    <property type="term" value="P:tRNA thio-modification"/>
    <property type="evidence" value="ECO:0007669"/>
    <property type="project" value="UniProtKB-UniRule"/>
</dbReference>
<dbReference type="CDD" id="cd24138">
    <property type="entry name" value="TtcA-like"/>
    <property type="match status" value="1"/>
</dbReference>
<dbReference type="Gene3D" id="3.40.50.620">
    <property type="entry name" value="HUPs"/>
    <property type="match status" value="1"/>
</dbReference>
<dbReference type="HAMAP" id="MF_01850">
    <property type="entry name" value="TtcA"/>
    <property type="match status" value="1"/>
</dbReference>
<dbReference type="InterPro" id="IPR014729">
    <property type="entry name" value="Rossmann-like_a/b/a_fold"/>
</dbReference>
<dbReference type="InterPro" id="IPR011063">
    <property type="entry name" value="TilS/TtcA_N"/>
</dbReference>
<dbReference type="InterPro" id="IPR012089">
    <property type="entry name" value="tRNA_Cyd_32_2_STrfase"/>
</dbReference>
<dbReference type="InterPro" id="IPR035107">
    <property type="entry name" value="tRNA_thiolation_TtcA_Ctu1"/>
</dbReference>
<dbReference type="NCBIfam" id="NF007972">
    <property type="entry name" value="PRK10696.1"/>
    <property type="match status" value="1"/>
</dbReference>
<dbReference type="PANTHER" id="PTHR43686:SF1">
    <property type="entry name" value="AMINOTRAN_5 DOMAIN-CONTAINING PROTEIN"/>
    <property type="match status" value="1"/>
</dbReference>
<dbReference type="PANTHER" id="PTHR43686">
    <property type="entry name" value="SULFURTRANSFERASE-RELATED"/>
    <property type="match status" value="1"/>
</dbReference>
<dbReference type="Pfam" id="PF01171">
    <property type="entry name" value="ATP_bind_3"/>
    <property type="match status" value="1"/>
</dbReference>
<dbReference type="PIRSF" id="PIRSF004976">
    <property type="entry name" value="ATPase_YdaO"/>
    <property type="match status" value="1"/>
</dbReference>
<dbReference type="SUPFAM" id="SSF52402">
    <property type="entry name" value="Adenine nucleotide alpha hydrolases-like"/>
    <property type="match status" value="1"/>
</dbReference>
<keyword id="KW-0004">4Fe-4S</keyword>
<keyword id="KW-0067">ATP-binding</keyword>
<keyword id="KW-0963">Cytoplasm</keyword>
<keyword id="KW-0408">Iron</keyword>
<keyword id="KW-0411">Iron-sulfur</keyword>
<keyword id="KW-0460">Magnesium</keyword>
<keyword id="KW-0479">Metal-binding</keyword>
<keyword id="KW-0547">Nucleotide-binding</keyword>
<keyword id="KW-0694">RNA-binding</keyword>
<keyword id="KW-0808">Transferase</keyword>
<keyword id="KW-0819">tRNA processing</keyword>
<keyword id="KW-0820">tRNA-binding</keyword>
<organism>
    <name type="scientific">Histophilus somni (strain 129Pt)</name>
    <name type="common">Haemophilus somnus</name>
    <dbReference type="NCBI Taxonomy" id="205914"/>
    <lineage>
        <taxon>Bacteria</taxon>
        <taxon>Pseudomonadati</taxon>
        <taxon>Pseudomonadota</taxon>
        <taxon>Gammaproteobacteria</taxon>
        <taxon>Pasteurellales</taxon>
        <taxon>Pasteurellaceae</taxon>
        <taxon>Histophilus</taxon>
    </lineage>
</organism>
<gene>
    <name evidence="1" type="primary">ttcA</name>
    <name type="ordered locus">HS_0863</name>
</gene>